<protein>
    <recommendedName>
        <fullName evidence="1">Large ribosomal subunit protein bL12</fullName>
    </recommendedName>
    <alternativeName>
        <fullName evidence="2">50S ribosomal protein L7/L12</fullName>
    </alternativeName>
</protein>
<gene>
    <name evidence="1" type="primary">rplL</name>
    <name type="ordered locus">OEOE_1416</name>
</gene>
<accession>Q04E45</accession>
<evidence type="ECO:0000255" key="1">
    <source>
        <dbReference type="HAMAP-Rule" id="MF_00368"/>
    </source>
</evidence>
<evidence type="ECO:0000305" key="2"/>
<dbReference type="EMBL" id="CP000411">
    <property type="protein sequence ID" value="ABJ57277.1"/>
    <property type="molecule type" value="Genomic_DNA"/>
</dbReference>
<dbReference type="RefSeq" id="WP_011677705.1">
    <property type="nucleotide sequence ID" value="NC_008528.1"/>
</dbReference>
<dbReference type="SMR" id="Q04E45"/>
<dbReference type="STRING" id="203123.OEOE_1416"/>
<dbReference type="KEGG" id="ooe:OEOE_1416"/>
<dbReference type="PATRIC" id="fig|203123.7.peg.1431"/>
<dbReference type="eggNOG" id="COG0222">
    <property type="taxonomic scope" value="Bacteria"/>
</dbReference>
<dbReference type="HOGENOM" id="CLU_086499_3_2_9"/>
<dbReference type="Proteomes" id="UP000000774">
    <property type="component" value="Chromosome"/>
</dbReference>
<dbReference type="GO" id="GO:0022625">
    <property type="term" value="C:cytosolic large ribosomal subunit"/>
    <property type="evidence" value="ECO:0007669"/>
    <property type="project" value="TreeGrafter"/>
</dbReference>
<dbReference type="GO" id="GO:0003729">
    <property type="term" value="F:mRNA binding"/>
    <property type="evidence" value="ECO:0007669"/>
    <property type="project" value="TreeGrafter"/>
</dbReference>
<dbReference type="GO" id="GO:0003735">
    <property type="term" value="F:structural constituent of ribosome"/>
    <property type="evidence" value="ECO:0007669"/>
    <property type="project" value="InterPro"/>
</dbReference>
<dbReference type="GO" id="GO:0006412">
    <property type="term" value="P:translation"/>
    <property type="evidence" value="ECO:0007669"/>
    <property type="project" value="UniProtKB-UniRule"/>
</dbReference>
<dbReference type="CDD" id="cd00387">
    <property type="entry name" value="Ribosomal_L7_L12"/>
    <property type="match status" value="1"/>
</dbReference>
<dbReference type="FunFam" id="3.30.1390.10:FF:000001">
    <property type="entry name" value="50S ribosomal protein L7/L12"/>
    <property type="match status" value="1"/>
</dbReference>
<dbReference type="Gene3D" id="3.30.1390.10">
    <property type="match status" value="1"/>
</dbReference>
<dbReference type="Gene3D" id="1.20.5.710">
    <property type="entry name" value="Single helix bin"/>
    <property type="match status" value="1"/>
</dbReference>
<dbReference type="HAMAP" id="MF_00368">
    <property type="entry name" value="Ribosomal_bL12"/>
    <property type="match status" value="1"/>
</dbReference>
<dbReference type="InterPro" id="IPR000206">
    <property type="entry name" value="Ribosomal_bL12"/>
</dbReference>
<dbReference type="InterPro" id="IPR013823">
    <property type="entry name" value="Ribosomal_bL12_C"/>
</dbReference>
<dbReference type="InterPro" id="IPR014719">
    <property type="entry name" value="Ribosomal_bL12_C/ClpS-like"/>
</dbReference>
<dbReference type="InterPro" id="IPR008932">
    <property type="entry name" value="Ribosomal_bL12_oligo"/>
</dbReference>
<dbReference type="InterPro" id="IPR036235">
    <property type="entry name" value="Ribosomal_bL12_oligo_N_sf"/>
</dbReference>
<dbReference type="NCBIfam" id="TIGR00855">
    <property type="entry name" value="L12"/>
    <property type="match status" value="1"/>
</dbReference>
<dbReference type="PANTHER" id="PTHR45987">
    <property type="entry name" value="39S RIBOSOMAL PROTEIN L12"/>
    <property type="match status" value="1"/>
</dbReference>
<dbReference type="PANTHER" id="PTHR45987:SF4">
    <property type="entry name" value="LARGE RIBOSOMAL SUBUNIT PROTEIN BL12M"/>
    <property type="match status" value="1"/>
</dbReference>
<dbReference type="Pfam" id="PF00542">
    <property type="entry name" value="Ribosomal_L12"/>
    <property type="match status" value="1"/>
</dbReference>
<dbReference type="Pfam" id="PF16320">
    <property type="entry name" value="Ribosomal_L12_N"/>
    <property type="match status" value="1"/>
</dbReference>
<dbReference type="SUPFAM" id="SSF54736">
    <property type="entry name" value="ClpS-like"/>
    <property type="match status" value="1"/>
</dbReference>
<dbReference type="SUPFAM" id="SSF48300">
    <property type="entry name" value="Ribosomal protein L7/12, oligomerisation (N-terminal) domain"/>
    <property type="match status" value="1"/>
</dbReference>
<keyword id="KW-1185">Reference proteome</keyword>
<keyword id="KW-0687">Ribonucleoprotein</keyword>
<keyword id="KW-0689">Ribosomal protein</keyword>
<feature type="chain" id="PRO_1000007049" description="Large ribosomal subunit protein bL12">
    <location>
        <begin position="1"/>
        <end position="121"/>
    </location>
</feature>
<proteinExistence type="inferred from homology"/>
<reference key="1">
    <citation type="journal article" date="2006" name="Proc. Natl. Acad. Sci. U.S.A.">
        <title>Comparative genomics of the lactic acid bacteria.</title>
        <authorList>
            <person name="Makarova K.S."/>
            <person name="Slesarev A."/>
            <person name="Wolf Y.I."/>
            <person name="Sorokin A."/>
            <person name="Mirkin B."/>
            <person name="Koonin E.V."/>
            <person name="Pavlov A."/>
            <person name="Pavlova N."/>
            <person name="Karamychev V."/>
            <person name="Polouchine N."/>
            <person name="Shakhova V."/>
            <person name="Grigoriev I."/>
            <person name="Lou Y."/>
            <person name="Rohksar D."/>
            <person name="Lucas S."/>
            <person name="Huang K."/>
            <person name="Goodstein D.M."/>
            <person name="Hawkins T."/>
            <person name="Plengvidhya V."/>
            <person name="Welker D."/>
            <person name="Hughes J."/>
            <person name="Goh Y."/>
            <person name="Benson A."/>
            <person name="Baldwin K."/>
            <person name="Lee J.-H."/>
            <person name="Diaz-Muniz I."/>
            <person name="Dosti B."/>
            <person name="Smeianov V."/>
            <person name="Wechter W."/>
            <person name="Barabote R."/>
            <person name="Lorca G."/>
            <person name="Altermann E."/>
            <person name="Barrangou R."/>
            <person name="Ganesan B."/>
            <person name="Xie Y."/>
            <person name="Rawsthorne H."/>
            <person name="Tamir D."/>
            <person name="Parker C."/>
            <person name="Breidt F."/>
            <person name="Broadbent J.R."/>
            <person name="Hutkins R."/>
            <person name="O'Sullivan D."/>
            <person name="Steele J."/>
            <person name="Unlu G."/>
            <person name="Saier M.H. Jr."/>
            <person name="Klaenhammer T."/>
            <person name="Richardson P."/>
            <person name="Kozyavkin S."/>
            <person name="Weimer B.C."/>
            <person name="Mills D.A."/>
        </authorList>
    </citation>
    <scope>NUCLEOTIDE SEQUENCE [LARGE SCALE GENOMIC DNA]</scope>
    <source>
        <strain>ATCC BAA-331 / PSU-1</strain>
    </source>
</reference>
<comment type="function">
    <text evidence="1">Forms part of the ribosomal stalk which helps the ribosome interact with GTP-bound translation factors. Is thus essential for accurate translation.</text>
</comment>
<comment type="subunit">
    <text evidence="1">Homodimer. Part of the ribosomal stalk of the 50S ribosomal subunit. Forms a multimeric L10(L12)X complex, where L10 forms an elongated spine to which 2 to 4 L12 dimers bind in a sequential fashion. Binds GTP-bound translation factors.</text>
</comment>
<comment type="similarity">
    <text evidence="1">Belongs to the bacterial ribosomal protein bL12 family.</text>
</comment>
<sequence length="121" mass="12224">MAFDKDAIIASLKEASILDLADLVKAIEDEFGVSAAAPVAAAGAAGDDAAAKDSFDVELTEPGQAKIGVIKAVRDATGLGLKESKDLVDGAPSVIKKDLNESDANDLKSKLEAAGATVALK</sequence>
<organism>
    <name type="scientific">Oenococcus oeni (strain ATCC BAA-331 / PSU-1)</name>
    <dbReference type="NCBI Taxonomy" id="203123"/>
    <lineage>
        <taxon>Bacteria</taxon>
        <taxon>Bacillati</taxon>
        <taxon>Bacillota</taxon>
        <taxon>Bacilli</taxon>
        <taxon>Lactobacillales</taxon>
        <taxon>Lactobacillaceae</taxon>
        <taxon>Oenococcus</taxon>
    </lineage>
</organism>
<name>RL7_OENOB</name>